<protein>
    <recommendedName>
        <fullName evidence="3">Protein BIG GRAIN 1-like</fullName>
    </recommendedName>
</protein>
<feature type="chain" id="PRO_0000434442" description="Protein BIG GRAIN 1-like">
    <location>
        <begin position="1"/>
        <end position="337"/>
    </location>
</feature>
<feature type="region of interest" description="Disordered" evidence="2">
    <location>
        <begin position="1"/>
        <end position="32"/>
    </location>
</feature>
<feature type="region of interest" description="Disordered" evidence="2">
    <location>
        <begin position="120"/>
        <end position="163"/>
    </location>
</feature>
<feature type="region of interest" description="Disordered" evidence="2">
    <location>
        <begin position="179"/>
        <end position="235"/>
    </location>
</feature>
<feature type="compositionally biased region" description="Basic and acidic residues" evidence="2">
    <location>
        <begin position="137"/>
        <end position="146"/>
    </location>
</feature>
<feature type="compositionally biased region" description="Low complexity" evidence="2">
    <location>
        <begin position="150"/>
        <end position="163"/>
    </location>
</feature>
<feature type="compositionally biased region" description="Low complexity" evidence="2">
    <location>
        <begin position="195"/>
        <end position="209"/>
    </location>
</feature>
<feature type="splice variant" id="VSP_057935" description="In isoform 2.">
    <original>GARL</original>
    <variation>APRV</variation>
    <location>
        <begin position="165"/>
        <end position="168"/>
    </location>
</feature>
<comment type="function">
    <text evidence="1">Involved in auxin transport. Regulator of the auxin signaling pathway.</text>
</comment>
<comment type="subcellular location">
    <subcellularLocation>
        <location evidence="1">Cell membrane</location>
    </subcellularLocation>
</comment>
<comment type="alternative products">
    <event type="alternative splicing"/>
    <isoform>
        <id>A3C4H3-1</id>
        <name>1</name>
        <sequence type="displayed"/>
    </isoform>
    <isoform>
        <id>A3C4H3-2</id>
        <name>2</name>
        <sequence type="described" ref="VSP_057935"/>
    </isoform>
</comment>
<comment type="similarity">
    <text evidence="3">Belongs to the BIG GRAIN 1 (BG1) plant protein family.</text>
</comment>
<comment type="sequence caution" evidence="3">
    <conflict type="erroneous gene model prediction">
        <sequence resource="EMBL-CDS" id="AAM01132"/>
    </conflict>
</comment>
<reference key="1">
    <citation type="journal article" date="2003" name="Science">
        <title>In-depth view of structure, activity, and evolution of rice chromosome 10.</title>
        <authorList>
            <person name="Yu Y."/>
            <person name="Rambo T."/>
            <person name="Currie J."/>
            <person name="Saski C."/>
            <person name="Kim H.-R."/>
            <person name="Collura K."/>
            <person name="Thompson S."/>
            <person name="Simmons J."/>
            <person name="Yang T.-J."/>
            <person name="Nah G."/>
            <person name="Patel A.J."/>
            <person name="Thurmond S."/>
            <person name="Henry D."/>
            <person name="Oates R."/>
            <person name="Palmer M."/>
            <person name="Pries G."/>
            <person name="Gibson J."/>
            <person name="Anderson H."/>
            <person name="Paradkar M."/>
            <person name="Crane L."/>
            <person name="Dale J."/>
            <person name="Carver M.B."/>
            <person name="Wood T."/>
            <person name="Frisch D."/>
            <person name="Engler F."/>
            <person name="Soderlund C."/>
            <person name="Palmer L.E."/>
            <person name="Teytelman L."/>
            <person name="Nascimento L."/>
            <person name="De la Bastide M."/>
            <person name="Spiegel L."/>
            <person name="Ware D."/>
            <person name="O'Shaughnessy A."/>
            <person name="Dike S."/>
            <person name="Dedhia N."/>
            <person name="Preston R."/>
            <person name="Huang E."/>
            <person name="Ferraro K."/>
            <person name="Kuit K."/>
            <person name="Miller B."/>
            <person name="Zutavern T."/>
            <person name="Katzenberger F."/>
            <person name="Muller S."/>
            <person name="Balija V."/>
            <person name="Martienssen R.A."/>
            <person name="Stein L."/>
            <person name="Minx P."/>
            <person name="Johnson D."/>
            <person name="Cordum H."/>
            <person name="Mardis E."/>
            <person name="Cheng Z."/>
            <person name="Jiang J."/>
            <person name="Wilson R."/>
            <person name="McCombie W.R."/>
            <person name="Wing R.A."/>
            <person name="Yuan Q."/>
            <person name="Ouyang S."/>
            <person name="Liu J."/>
            <person name="Jones K.M."/>
            <person name="Gansberger K."/>
            <person name="Moffat K."/>
            <person name="Hill J."/>
            <person name="Tsitrin T."/>
            <person name="Overton L."/>
            <person name="Bera J."/>
            <person name="Kim M."/>
            <person name="Jin S."/>
            <person name="Tallon L."/>
            <person name="Ciecko A."/>
            <person name="Pai G."/>
            <person name="Van Aken S."/>
            <person name="Utterback T."/>
            <person name="Reidmuller S."/>
            <person name="Bormann J."/>
            <person name="Feldblyum T."/>
            <person name="Hsiao J."/>
            <person name="Zismann V."/>
            <person name="Blunt S."/>
            <person name="de Vazeille A.R."/>
            <person name="Shaffer T."/>
            <person name="Koo H."/>
            <person name="Suh B."/>
            <person name="Yang Q."/>
            <person name="Haas B."/>
            <person name="Peterson J."/>
            <person name="Pertea M."/>
            <person name="Volfovsky N."/>
            <person name="Wortman J."/>
            <person name="White O."/>
            <person name="Salzberg S.L."/>
            <person name="Fraser C.M."/>
            <person name="Buell C.R."/>
            <person name="Messing J."/>
            <person name="Song R."/>
            <person name="Fuks G."/>
            <person name="Llaca V."/>
            <person name="Kovchak S."/>
            <person name="Young S."/>
            <person name="Bowers J.E."/>
            <person name="Paterson A.H."/>
            <person name="Johns M.A."/>
            <person name="Mao L."/>
            <person name="Pan H."/>
            <person name="Dean R.A."/>
        </authorList>
    </citation>
    <scope>NUCLEOTIDE SEQUENCE [LARGE SCALE GENOMIC DNA]</scope>
    <source>
        <strain>cv. Nipponbare</strain>
    </source>
</reference>
<reference key="2">
    <citation type="journal article" date="2005" name="Nature">
        <title>The map-based sequence of the rice genome.</title>
        <authorList>
            <consortium name="International rice genome sequencing project (IRGSP)"/>
        </authorList>
    </citation>
    <scope>NUCLEOTIDE SEQUENCE [LARGE SCALE GENOMIC DNA]</scope>
    <source>
        <strain>cv. Nipponbare</strain>
    </source>
</reference>
<reference key="3">
    <citation type="journal article" date="2008" name="Nucleic Acids Res.">
        <title>The rice annotation project database (RAP-DB): 2008 update.</title>
        <authorList>
            <consortium name="The rice annotation project (RAP)"/>
        </authorList>
    </citation>
    <scope>GENOME REANNOTATION</scope>
    <source>
        <strain>cv. Nipponbare</strain>
    </source>
</reference>
<reference key="4">
    <citation type="journal article" date="2013" name="Rice">
        <title>Improvement of the Oryza sativa Nipponbare reference genome using next generation sequence and optical map data.</title>
        <authorList>
            <person name="Kawahara Y."/>
            <person name="de la Bastide M."/>
            <person name="Hamilton J.P."/>
            <person name="Kanamori H."/>
            <person name="McCombie W.R."/>
            <person name="Ouyang S."/>
            <person name="Schwartz D.C."/>
            <person name="Tanaka T."/>
            <person name="Wu J."/>
            <person name="Zhou S."/>
            <person name="Childs K.L."/>
            <person name="Davidson R.M."/>
            <person name="Lin H."/>
            <person name="Quesada-Ocampo L."/>
            <person name="Vaillancourt B."/>
            <person name="Sakai H."/>
            <person name="Lee S.S."/>
            <person name="Kim J."/>
            <person name="Numa H."/>
            <person name="Itoh T."/>
            <person name="Buell C.R."/>
            <person name="Matsumoto T."/>
        </authorList>
    </citation>
    <scope>GENOME REANNOTATION</scope>
    <source>
        <strain>cv. Nipponbare</strain>
    </source>
</reference>
<reference key="5">
    <citation type="journal article" date="2005" name="PLoS Biol.">
        <title>The genomes of Oryza sativa: a history of duplications.</title>
        <authorList>
            <person name="Yu J."/>
            <person name="Wang J."/>
            <person name="Lin W."/>
            <person name="Li S."/>
            <person name="Li H."/>
            <person name="Zhou J."/>
            <person name="Ni P."/>
            <person name="Dong W."/>
            <person name="Hu S."/>
            <person name="Zeng C."/>
            <person name="Zhang J."/>
            <person name="Zhang Y."/>
            <person name="Li R."/>
            <person name="Xu Z."/>
            <person name="Li S."/>
            <person name="Li X."/>
            <person name="Zheng H."/>
            <person name="Cong L."/>
            <person name="Lin L."/>
            <person name="Yin J."/>
            <person name="Geng J."/>
            <person name="Li G."/>
            <person name="Shi J."/>
            <person name="Liu J."/>
            <person name="Lv H."/>
            <person name="Li J."/>
            <person name="Wang J."/>
            <person name="Deng Y."/>
            <person name="Ran L."/>
            <person name="Shi X."/>
            <person name="Wang X."/>
            <person name="Wu Q."/>
            <person name="Li C."/>
            <person name="Ren X."/>
            <person name="Wang J."/>
            <person name="Wang X."/>
            <person name="Li D."/>
            <person name="Liu D."/>
            <person name="Zhang X."/>
            <person name="Ji Z."/>
            <person name="Zhao W."/>
            <person name="Sun Y."/>
            <person name="Zhang Z."/>
            <person name="Bao J."/>
            <person name="Han Y."/>
            <person name="Dong L."/>
            <person name="Ji J."/>
            <person name="Chen P."/>
            <person name="Wu S."/>
            <person name="Liu J."/>
            <person name="Xiao Y."/>
            <person name="Bu D."/>
            <person name="Tan J."/>
            <person name="Yang L."/>
            <person name="Ye C."/>
            <person name="Zhang J."/>
            <person name="Xu J."/>
            <person name="Zhou Y."/>
            <person name="Yu Y."/>
            <person name="Zhang B."/>
            <person name="Zhuang S."/>
            <person name="Wei H."/>
            <person name="Liu B."/>
            <person name="Lei M."/>
            <person name="Yu H."/>
            <person name="Li Y."/>
            <person name="Xu H."/>
            <person name="Wei S."/>
            <person name="He X."/>
            <person name="Fang L."/>
            <person name="Zhang Z."/>
            <person name="Zhang Y."/>
            <person name="Huang X."/>
            <person name="Su Z."/>
            <person name="Tong W."/>
            <person name="Li J."/>
            <person name="Tong Z."/>
            <person name="Li S."/>
            <person name="Ye J."/>
            <person name="Wang L."/>
            <person name="Fang L."/>
            <person name="Lei T."/>
            <person name="Chen C.-S."/>
            <person name="Chen H.-C."/>
            <person name="Xu Z."/>
            <person name="Li H."/>
            <person name="Huang H."/>
            <person name="Zhang F."/>
            <person name="Xu H."/>
            <person name="Li N."/>
            <person name="Zhao C."/>
            <person name="Li S."/>
            <person name="Dong L."/>
            <person name="Huang Y."/>
            <person name="Li L."/>
            <person name="Xi Y."/>
            <person name="Qi Q."/>
            <person name="Li W."/>
            <person name="Zhang B."/>
            <person name="Hu W."/>
            <person name="Zhang Y."/>
            <person name="Tian X."/>
            <person name="Jiao Y."/>
            <person name="Liang X."/>
            <person name="Jin J."/>
            <person name="Gao L."/>
            <person name="Zheng W."/>
            <person name="Hao B."/>
            <person name="Liu S.-M."/>
            <person name="Wang W."/>
            <person name="Yuan L."/>
            <person name="Cao M."/>
            <person name="McDermott J."/>
            <person name="Samudrala R."/>
            <person name="Wang J."/>
            <person name="Wong G.K.-S."/>
            <person name="Yang H."/>
        </authorList>
    </citation>
    <scope>NUCLEOTIDE SEQUENCE [LARGE SCALE GENOMIC DNA]</scope>
    <source>
        <strain>cv. Nipponbare</strain>
    </source>
</reference>
<proteinExistence type="inferred from homology"/>
<sequence length="337" mass="35846">MRDMEMRWAAPAPAARGRGRARRRAPDQPSFSSTLLDAICDSMDEGGEDGRTRNAASAAAKKRQEAANSYHYYYCYKPSLAASYRAAPALGSTADCPGRGYFSSSEVEYSLRRLRPIRTSAAGGAGDGAAVARKQRHEQPDVEKTAKTKPGSASARACRRPASPGARLASLLNSIFSGKRPSAQRPACSPDYPEPACSTAPPSSSSSYARRPCHAKTPRTPPTTTTTARARPSRSRTVRFLDIDGKVAVAAAVAGCRRIPVMEVEADTDDGGEESSDASSDLFELDSLAAIAPAGGRDGSYGDELPVYGTTGVGIRRDIGRRRPYGHAPCRSWSRAV</sequence>
<dbReference type="EMBL" id="AC108884">
    <property type="protein sequence ID" value="AAM01132.1"/>
    <property type="status" value="ALT_SEQ"/>
    <property type="molecule type" value="Genomic_DNA"/>
</dbReference>
<dbReference type="EMBL" id="DP000086">
    <property type="protein sequence ID" value="ABB47525.1"/>
    <property type="molecule type" value="Genomic_DNA"/>
</dbReference>
<dbReference type="EMBL" id="AP008216">
    <property type="status" value="NOT_ANNOTATED_CDS"/>
    <property type="molecule type" value="Genomic_DNA"/>
</dbReference>
<dbReference type="EMBL" id="AP014966">
    <property type="status" value="NOT_ANNOTATED_CDS"/>
    <property type="molecule type" value="Genomic_DNA"/>
</dbReference>
<dbReference type="EMBL" id="CM000147">
    <property type="protein sequence ID" value="EAZ15986.1"/>
    <property type="molecule type" value="Genomic_DNA"/>
</dbReference>
<dbReference type="RefSeq" id="XP_015613899.1">
    <property type="nucleotide sequence ID" value="XM_015758413.1"/>
</dbReference>
<dbReference type="FunCoup" id="A3C4H3">
    <property type="interactions" value="696"/>
</dbReference>
<dbReference type="PaxDb" id="39947-A3C4H3"/>
<dbReference type="GeneID" id="107279147"/>
<dbReference type="KEGG" id="osa:107279147"/>
<dbReference type="InParanoid" id="A3C4H3"/>
<dbReference type="OrthoDB" id="680041at2759"/>
<dbReference type="Proteomes" id="UP000000763">
    <property type="component" value="Chromosome 10"/>
</dbReference>
<dbReference type="Proteomes" id="UP000007752">
    <property type="component" value="Chromosome 10"/>
</dbReference>
<dbReference type="Proteomes" id="UP000059680">
    <property type="component" value="Chromosome 10"/>
</dbReference>
<dbReference type="GO" id="GO:0005886">
    <property type="term" value="C:plasma membrane"/>
    <property type="evidence" value="ECO:0000250"/>
    <property type="project" value="UniProtKB"/>
</dbReference>
<dbReference type="GO" id="GO:0060918">
    <property type="term" value="P:auxin transport"/>
    <property type="evidence" value="ECO:0000250"/>
    <property type="project" value="UniProtKB"/>
</dbReference>
<dbReference type="GO" id="GO:0009734">
    <property type="term" value="P:auxin-activated signaling pathway"/>
    <property type="evidence" value="ECO:0007669"/>
    <property type="project" value="UniProtKB-KW"/>
</dbReference>
<dbReference type="GO" id="GO:0010929">
    <property type="term" value="P:positive regulation of auxin mediated signaling pathway"/>
    <property type="evidence" value="ECO:0000250"/>
    <property type="project" value="UniProtKB"/>
</dbReference>
<dbReference type="InterPro" id="IPR039621">
    <property type="entry name" value="BG1-like"/>
</dbReference>
<dbReference type="PANTHER" id="PTHR33541:SF9">
    <property type="entry name" value="PROTEIN BIG GRAIN 1-LIKE"/>
    <property type="match status" value="1"/>
</dbReference>
<dbReference type="PANTHER" id="PTHR33541">
    <property type="entry name" value="PROTEIN BIG GRAIN 1-LIKE A-RELATED"/>
    <property type="match status" value="1"/>
</dbReference>
<accession>A3C4H3</accession>
<accession>Q338K8</accession>
<accession>Q8S5Q0</accession>
<name>BIG1L_ORYSJ</name>
<keyword id="KW-0025">Alternative splicing</keyword>
<keyword id="KW-0927">Auxin signaling pathway</keyword>
<keyword id="KW-1003">Cell membrane</keyword>
<keyword id="KW-0472">Membrane</keyword>
<keyword id="KW-1185">Reference proteome</keyword>
<keyword id="KW-0813">Transport</keyword>
<gene>
    <name evidence="5" type="ordered locus">LOC_Os10g25810</name>
    <name evidence="3" type="ordered locus">Os10g0397600</name>
    <name evidence="6" type="ORF">OsJ_31430</name>
    <name evidence="4" type="ORF">OSJNBb0058B20.14</name>
</gene>
<organism>
    <name type="scientific">Oryza sativa subsp. japonica</name>
    <name type="common">Rice</name>
    <dbReference type="NCBI Taxonomy" id="39947"/>
    <lineage>
        <taxon>Eukaryota</taxon>
        <taxon>Viridiplantae</taxon>
        <taxon>Streptophyta</taxon>
        <taxon>Embryophyta</taxon>
        <taxon>Tracheophyta</taxon>
        <taxon>Spermatophyta</taxon>
        <taxon>Magnoliopsida</taxon>
        <taxon>Liliopsida</taxon>
        <taxon>Poales</taxon>
        <taxon>Poaceae</taxon>
        <taxon>BOP clade</taxon>
        <taxon>Oryzoideae</taxon>
        <taxon>Oryzeae</taxon>
        <taxon>Oryzinae</taxon>
        <taxon>Oryza</taxon>
        <taxon>Oryza sativa</taxon>
    </lineage>
</organism>
<evidence type="ECO:0000250" key="1">
    <source>
        <dbReference type="UniProtKB" id="Q10R09"/>
    </source>
</evidence>
<evidence type="ECO:0000256" key="2">
    <source>
        <dbReference type="SAM" id="MobiDB-lite"/>
    </source>
</evidence>
<evidence type="ECO:0000305" key="3"/>
<evidence type="ECO:0000312" key="4">
    <source>
        <dbReference type="EMBL" id="AAM01132.1"/>
    </source>
</evidence>
<evidence type="ECO:0000312" key="5">
    <source>
        <dbReference type="EMBL" id="ABB47525.1"/>
    </source>
</evidence>
<evidence type="ECO:0000312" key="6">
    <source>
        <dbReference type="EMBL" id="EAZ15986.1"/>
    </source>
</evidence>